<protein>
    <recommendedName>
        <fullName evidence="1">UPF0397 protein lp_0150</fullName>
    </recommendedName>
</protein>
<gene>
    <name type="ordered locus">lp_0150</name>
</gene>
<reference key="1">
    <citation type="journal article" date="2003" name="Proc. Natl. Acad. Sci. U.S.A.">
        <title>Complete genome sequence of Lactobacillus plantarum WCFS1.</title>
        <authorList>
            <person name="Kleerebezem M."/>
            <person name="Boekhorst J."/>
            <person name="van Kranenburg R."/>
            <person name="Molenaar D."/>
            <person name="Kuipers O.P."/>
            <person name="Leer R."/>
            <person name="Tarchini R."/>
            <person name="Peters S.A."/>
            <person name="Sandbrink H.M."/>
            <person name="Fiers M.W.E.J."/>
            <person name="Stiekema W."/>
            <person name="Klein Lankhorst R.M."/>
            <person name="Bron P.A."/>
            <person name="Hoffer S.M."/>
            <person name="Nierop Groot M.N."/>
            <person name="Kerkhoven R."/>
            <person name="De Vries M."/>
            <person name="Ursing B."/>
            <person name="De Vos W.M."/>
            <person name="Siezen R.J."/>
        </authorList>
    </citation>
    <scope>NUCLEOTIDE SEQUENCE [LARGE SCALE GENOMIC DNA]</scope>
    <source>
        <strain>ATCC BAA-793 / NCIMB 8826 / WCFS1</strain>
    </source>
</reference>
<reference key="2">
    <citation type="journal article" date="2012" name="J. Bacteriol.">
        <title>Complete resequencing and reannotation of the Lactobacillus plantarum WCFS1 genome.</title>
        <authorList>
            <person name="Siezen R.J."/>
            <person name="Francke C."/>
            <person name="Renckens B."/>
            <person name="Boekhorst J."/>
            <person name="Wels M."/>
            <person name="Kleerebezem M."/>
            <person name="van Hijum S.A."/>
        </authorList>
    </citation>
    <scope>NUCLEOTIDE SEQUENCE [LARGE SCALE GENOMIC DNA]</scope>
    <scope>GENOME REANNOTATION</scope>
    <source>
        <strain>ATCC BAA-793 / NCIMB 8826 / WCFS1</strain>
    </source>
</reference>
<name>Y150_LACPL</name>
<comment type="subcellular location">
    <subcellularLocation>
        <location evidence="1">Cell membrane</location>
        <topology evidence="1">Multi-pass membrane protein</topology>
    </subcellularLocation>
</comment>
<comment type="similarity">
    <text evidence="1">Belongs to the UPF0397 family.</text>
</comment>
<accession>Q88ZZ1</accession>
<accession>F9USW6</accession>
<feature type="chain" id="PRO_0000260798" description="UPF0397 protein lp_0150">
    <location>
        <begin position="1"/>
        <end position="186"/>
    </location>
</feature>
<feature type="transmembrane region" description="Helical" evidence="1">
    <location>
        <begin position="12"/>
        <end position="32"/>
    </location>
</feature>
<feature type="transmembrane region" description="Helical" evidence="1">
    <location>
        <begin position="45"/>
        <end position="65"/>
    </location>
</feature>
<feature type="transmembrane region" description="Helical" evidence="1">
    <location>
        <begin position="76"/>
        <end position="96"/>
    </location>
</feature>
<feature type="transmembrane region" description="Helical" evidence="1">
    <location>
        <begin position="112"/>
        <end position="132"/>
    </location>
</feature>
<feature type="transmembrane region" description="Helical" evidence="1">
    <location>
        <begin position="151"/>
        <end position="171"/>
    </location>
</feature>
<proteinExistence type="inferred from homology"/>
<organism>
    <name type="scientific">Lactiplantibacillus plantarum (strain ATCC BAA-793 / NCIMB 8826 / WCFS1)</name>
    <name type="common">Lactobacillus plantarum</name>
    <dbReference type="NCBI Taxonomy" id="220668"/>
    <lineage>
        <taxon>Bacteria</taxon>
        <taxon>Bacillati</taxon>
        <taxon>Bacillota</taxon>
        <taxon>Bacilli</taxon>
        <taxon>Lactobacillales</taxon>
        <taxon>Lactobacillaceae</taxon>
        <taxon>Lactiplantibacillus</taxon>
    </lineage>
</organism>
<dbReference type="EMBL" id="AL935263">
    <property type="protein sequence ID" value="CCC77697.1"/>
    <property type="molecule type" value="Genomic_DNA"/>
</dbReference>
<dbReference type="RefSeq" id="WP_003641748.1">
    <property type="nucleotide sequence ID" value="NC_004567.2"/>
</dbReference>
<dbReference type="RefSeq" id="YP_004888211.1">
    <property type="nucleotide sequence ID" value="NC_004567.2"/>
</dbReference>
<dbReference type="STRING" id="220668.lp_0150"/>
<dbReference type="EnsemblBacteria" id="CCC77697">
    <property type="protein sequence ID" value="CCC77697"/>
    <property type="gene ID" value="lp_0150"/>
</dbReference>
<dbReference type="KEGG" id="lpl:lp_0150"/>
<dbReference type="PATRIC" id="fig|220668.9.peg.121"/>
<dbReference type="eggNOG" id="COG4720">
    <property type="taxonomic scope" value="Bacteria"/>
</dbReference>
<dbReference type="HOGENOM" id="CLU_120023_0_0_9"/>
<dbReference type="OrthoDB" id="4550662at2"/>
<dbReference type="PhylomeDB" id="Q88ZZ1"/>
<dbReference type="Proteomes" id="UP000000432">
    <property type="component" value="Chromosome"/>
</dbReference>
<dbReference type="GO" id="GO:0005886">
    <property type="term" value="C:plasma membrane"/>
    <property type="evidence" value="ECO:0007669"/>
    <property type="project" value="UniProtKB-SubCell"/>
</dbReference>
<dbReference type="Gene3D" id="1.10.1760.20">
    <property type="match status" value="1"/>
</dbReference>
<dbReference type="HAMAP" id="MF_01572">
    <property type="entry name" value="UPF0397"/>
    <property type="match status" value="1"/>
</dbReference>
<dbReference type="InterPro" id="IPR009825">
    <property type="entry name" value="ECF_substrate-spec-like"/>
</dbReference>
<dbReference type="InterPro" id="IPR022914">
    <property type="entry name" value="UPF0397"/>
</dbReference>
<dbReference type="NCBIfam" id="NF010182">
    <property type="entry name" value="PRK13661.1"/>
    <property type="match status" value="1"/>
</dbReference>
<dbReference type="PANTHER" id="PTHR37815">
    <property type="entry name" value="UPF0397 PROTEIN BC_2624-RELATED"/>
    <property type="match status" value="1"/>
</dbReference>
<dbReference type="PANTHER" id="PTHR37815:SF3">
    <property type="entry name" value="UPF0397 PROTEIN SPR0429"/>
    <property type="match status" value="1"/>
</dbReference>
<dbReference type="Pfam" id="PF07155">
    <property type="entry name" value="ECF-ribofla_trS"/>
    <property type="match status" value="1"/>
</dbReference>
<evidence type="ECO:0000255" key="1">
    <source>
        <dbReference type="HAMAP-Rule" id="MF_01572"/>
    </source>
</evidence>
<sequence>MQNKQSNSIRTVVATGIGAAVIFVLMKFVAIPTGVPNTQVNVAMGFLALLGAIFGPVAAGLAVFIGHALNDFVTYGSPWWTWVIVDGLIGVAFGLAKNRLKIENGVLGTAKLVWFNIYQIIVNFIGWVLLAPTGDIIIYHEPANKVYLQGVITWIADSISVAIIGTILLVLYARTRTQRGSLTKER</sequence>
<keyword id="KW-1003">Cell membrane</keyword>
<keyword id="KW-0472">Membrane</keyword>
<keyword id="KW-1185">Reference proteome</keyword>
<keyword id="KW-0812">Transmembrane</keyword>
<keyword id="KW-1133">Transmembrane helix</keyword>